<keyword id="KW-0997">Cell inner membrane</keyword>
<keyword id="KW-1003">Cell membrane</keyword>
<keyword id="KW-0407">Ion channel</keyword>
<keyword id="KW-0406">Ion transport</keyword>
<keyword id="KW-0472">Membrane</keyword>
<keyword id="KW-0479">Metal-binding</keyword>
<keyword id="KW-0915">Sodium</keyword>
<keyword id="KW-0812">Transmembrane</keyword>
<keyword id="KW-1133">Transmembrane helix</keyword>
<keyword id="KW-0813">Transport</keyword>
<dbReference type="EMBL" id="CP000946">
    <property type="protein sequence ID" value="ACA78644.1"/>
    <property type="molecule type" value="Genomic_DNA"/>
</dbReference>
<dbReference type="RefSeq" id="WP_000939749.1">
    <property type="nucleotide sequence ID" value="NZ_MTFT01000005.1"/>
</dbReference>
<dbReference type="SMR" id="B1IYI2"/>
<dbReference type="KEGG" id="ecl:EcolC_3020"/>
<dbReference type="HOGENOM" id="CLU_114342_3_3_6"/>
<dbReference type="GO" id="GO:0005886">
    <property type="term" value="C:plasma membrane"/>
    <property type="evidence" value="ECO:0007669"/>
    <property type="project" value="UniProtKB-SubCell"/>
</dbReference>
<dbReference type="GO" id="GO:0062054">
    <property type="term" value="F:fluoride channel activity"/>
    <property type="evidence" value="ECO:0007669"/>
    <property type="project" value="UniProtKB-UniRule"/>
</dbReference>
<dbReference type="GO" id="GO:0046872">
    <property type="term" value="F:metal ion binding"/>
    <property type="evidence" value="ECO:0007669"/>
    <property type="project" value="UniProtKB-KW"/>
</dbReference>
<dbReference type="GO" id="GO:0140114">
    <property type="term" value="P:cellular detoxification of fluoride"/>
    <property type="evidence" value="ECO:0007669"/>
    <property type="project" value="UniProtKB-UniRule"/>
</dbReference>
<dbReference type="HAMAP" id="MF_00454">
    <property type="entry name" value="FluC"/>
    <property type="match status" value="1"/>
</dbReference>
<dbReference type="InterPro" id="IPR003691">
    <property type="entry name" value="FluC"/>
</dbReference>
<dbReference type="NCBIfam" id="TIGR00494">
    <property type="entry name" value="crcB"/>
    <property type="match status" value="1"/>
</dbReference>
<dbReference type="NCBIfam" id="NF010792">
    <property type="entry name" value="PRK14196.1"/>
    <property type="match status" value="1"/>
</dbReference>
<dbReference type="PANTHER" id="PTHR28259">
    <property type="entry name" value="FLUORIDE EXPORT PROTEIN 1-RELATED"/>
    <property type="match status" value="1"/>
</dbReference>
<dbReference type="PANTHER" id="PTHR28259:SF1">
    <property type="entry name" value="FLUORIDE EXPORT PROTEIN 1-RELATED"/>
    <property type="match status" value="1"/>
</dbReference>
<dbReference type="Pfam" id="PF02537">
    <property type="entry name" value="CRCB"/>
    <property type="match status" value="1"/>
</dbReference>
<organism>
    <name type="scientific">Escherichia coli (strain ATCC 8739 / DSM 1576 / NBRC 3972 / NCIMB 8545 / WDCM 00012 / Crooks)</name>
    <dbReference type="NCBI Taxonomy" id="481805"/>
    <lineage>
        <taxon>Bacteria</taxon>
        <taxon>Pseudomonadati</taxon>
        <taxon>Pseudomonadota</taxon>
        <taxon>Gammaproteobacteria</taxon>
        <taxon>Enterobacterales</taxon>
        <taxon>Enterobacteriaceae</taxon>
        <taxon>Escherichia</taxon>
    </lineage>
</organism>
<proteinExistence type="inferred from homology"/>
<accession>B1IYI2</accession>
<protein>
    <recommendedName>
        <fullName evidence="1">Fluoride-specific ion channel FluC</fullName>
    </recommendedName>
</protein>
<sequence>MLQLLLAVFIGGGTGSVARWLLSMRFNPLHQAIPLGTLTANLIGAFIIGMGFAWFSRMTNIDPVWKVLITTGFCGGLTTFSTFSAEVVFLLQEGRFGWALLNVFVNLLGSFAMTALAFWLFSASTAH</sequence>
<name>FLUC_ECOLC</name>
<comment type="function">
    <text evidence="1">Fluoride-specific ion channel. Important for reducing fluoride concentration in the cell, thus reducing its toxicity.</text>
</comment>
<comment type="catalytic activity">
    <reaction evidence="1">
        <text>fluoride(in) = fluoride(out)</text>
        <dbReference type="Rhea" id="RHEA:76159"/>
        <dbReference type="ChEBI" id="CHEBI:17051"/>
    </reaction>
    <physiologicalReaction direction="left-to-right" evidence="1">
        <dbReference type="Rhea" id="RHEA:76160"/>
    </physiologicalReaction>
</comment>
<comment type="activity regulation">
    <text evidence="1">Na(+) is not transported, but it plays an essential structural role and its presence is essential for fluoride channel function.</text>
</comment>
<comment type="subcellular location">
    <subcellularLocation>
        <location evidence="1">Cell inner membrane</location>
        <topology evidence="1">Multi-pass membrane protein</topology>
    </subcellularLocation>
</comment>
<comment type="similarity">
    <text evidence="1">Belongs to the fluoride channel Fluc/FEX (TC 1.A.43) family.</text>
</comment>
<reference key="1">
    <citation type="submission" date="2008-02" db="EMBL/GenBank/DDBJ databases">
        <title>Complete sequence of Escherichia coli C str. ATCC 8739.</title>
        <authorList>
            <person name="Copeland A."/>
            <person name="Lucas S."/>
            <person name="Lapidus A."/>
            <person name="Glavina del Rio T."/>
            <person name="Dalin E."/>
            <person name="Tice H."/>
            <person name="Bruce D."/>
            <person name="Goodwin L."/>
            <person name="Pitluck S."/>
            <person name="Kiss H."/>
            <person name="Brettin T."/>
            <person name="Detter J.C."/>
            <person name="Han C."/>
            <person name="Kuske C.R."/>
            <person name="Schmutz J."/>
            <person name="Larimer F."/>
            <person name="Land M."/>
            <person name="Hauser L."/>
            <person name="Kyrpides N."/>
            <person name="Mikhailova N."/>
            <person name="Ingram L."/>
            <person name="Richardson P."/>
        </authorList>
    </citation>
    <scope>NUCLEOTIDE SEQUENCE [LARGE SCALE GENOMIC DNA]</scope>
    <source>
        <strain>ATCC 8739 / DSM 1576 / NBRC 3972 / NCIMB 8545 / WDCM 00012 / Crooks</strain>
    </source>
</reference>
<gene>
    <name evidence="1" type="primary">fluC</name>
    <name evidence="1" type="synonym">crcB</name>
    <name type="ordered locus">EcolC_3020</name>
</gene>
<feature type="chain" id="PRO_1000081012" description="Fluoride-specific ion channel FluC">
    <location>
        <begin position="1"/>
        <end position="127"/>
    </location>
</feature>
<feature type="transmembrane region" description="Helical" evidence="1">
    <location>
        <begin position="4"/>
        <end position="24"/>
    </location>
</feature>
<feature type="transmembrane region" description="Helical" evidence="1">
    <location>
        <begin position="35"/>
        <end position="55"/>
    </location>
</feature>
<feature type="transmembrane region" description="Helical" evidence="1">
    <location>
        <begin position="71"/>
        <end position="91"/>
    </location>
</feature>
<feature type="transmembrane region" description="Helical" evidence="1">
    <location>
        <begin position="103"/>
        <end position="123"/>
    </location>
</feature>
<feature type="binding site" evidence="1">
    <location>
        <position position="75"/>
    </location>
    <ligand>
        <name>Na(+)</name>
        <dbReference type="ChEBI" id="CHEBI:29101"/>
        <note>structural</note>
    </ligand>
</feature>
<feature type="binding site" evidence="1">
    <location>
        <position position="78"/>
    </location>
    <ligand>
        <name>Na(+)</name>
        <dbReference type="ChEBI" id="CHEBI:29101"/>
        <note>structural</note>
    </ligand>
</feature>
<evidence type="ECO:0000255" key="1">
    <source>
        <dbReference type="HAMAP-Rule" id="MF_00454"/>
    </source>
</evidence>